<protein>
    <recommendedName>
        <fullName evidence="1">Queuine tRNA-ribosyltransferase</fullName>
        <ecNumber evidence="1">2.4.2.29</ecNumber>
    </recommendedName>
    <alternativeName>
        <fullName evidence="1">Guanine insertion enzyme</fullName>
    </alternativeName>
    <alternativeName>
        <fullName evidence="1">tRNA-guanine transglycosylase</fullName>
    </alternativeName>
</protein>
<accession>B9L8E1</accession>
<reference key="1">
    <citation type="journal article" date="2009" name="PLoS Genet.">
        <title>Adaptations to submarine hydrothermal environments exemplified by the genome of Nautilia profundicola.</title>
        <authorList>
            <person name="Campbell B.J."/>
            <person name="Smith J.L."/>
            <person name="Hanson T.E."/>
            <person name="Klotz M.G."/>
            <person name="Stein L.Y."/>
            <person name="Lee C.K."/>
            <person name="Wu D."/>
            <person name="Robinson J.M."/>
            <person name="Khouri H.M."/>
            <person name="Eisen J.A."/>
            <person name="Cary S.C."/>
        </authorList>
    </citation>
    <scope>NUCLEOTIDE SEQUENCE [LARGE SCALE GENOMIC DNA]</scope>
    <source>
        <strain>ATCC BAA-1463 / DSM 18972 / AmH</strain>
    </source>
</reference>
<feature type="chain" id="PRO_1000198017" description="Queuine tRNA-ribosyltransferase">
    <location>
        <begin position="1"/>
        <end position="378"/>
    </location>
</feature>
<feature type="region of interest" description="RNA binding" evidence="1">
    <location>
        <begin position="251"/>
        <end position="257"/>
    </location>
</feature>
<feature type="region of interest" description="RNA binding; important for wobble base 34 recognition" evidence="1">
    <location>
        <begin position="275"/>
        <end position="279"/>
    </location>
</feature>
<feature type="active site" description="Proton acceptor" evidence="1">
    <location>
        <position position="90"/>
    </location>
</feature>
<feature type="active site" description="Nucleophile" evidence="1">
    <location>
        <position position="270"/>
    </location>
</feature>
<feature type="binding site" evidence="1">
    <location>
        <begin position="90"/>
        <end position="94"/>
    </location>
    <ligand>
        <name>substrate</name>
    </ligand>
</feature>
<feature type="binding site" evidence="1">
    <location>
        <position position="144"/>
    </location>
    <ligand>
        <name>substrate</name>
    </ligand>
</feature>
<feature type="binding site" evidence="1">
    <location>
        <position position="188"/>
    </location>
    <ligand>
        <name>substrate</name>
    </ligand>
</feature>
<feature type="binding site" evidence="1">
    <location>
        <position position="220"/>
    </location>
    <ligand>
        <name>substrate</name>
    </ligand>
</feature>
<feature type="binding site" evidence="1">
    <location>
        <position position="308"/>
    </location>
    <ligand>
        <name>Zn(2+)</name>
        <dbReference type="ChEBI" id="CHEBI:29105"/>
    </ligand>
</feature>
<feature type="binding site" evidence="1">
    <location>
        <position position="310"/>
    </location>
    <ligand>
        <name>Zn(2+)</name>
        <dbReference type="ChEBI" id="CHEBI:29105"/>
    </ligand>
</feature>
<feature type="binding site" evidence="1">
    <location>
        <position position="313"/>
    </location>
    <ligand>
        <name>Zn(2+)</name>
        <dbReference type="ChEBI" id="CHEBI:29105"/>
    </ligand>
</feature>
<feature type="binding site" evidence="1">
    <location>
        <position position="339"/>
    </location>
    <ligand>
        <name>Zn(2+)</name>
        <dbReference type="ChEBI" id="CHEBI:29105"/>
    </ligand>
</feature>
<name>TGT_NAUPA</name>
<evidence type="ECO:0000255" key="1">
    <source>
        <dbReference type="HAMAP-Rule" id="MF_00168"/>
    </source>
</evidence>
<gene>
    <name evidence="1" type="primary">tgt</name>
    <name type="ordered locus">NAMH_0482</name>
</gene>
<organism>
    <name type="scientific">Nautilia profundicola (strain ATCC BAA-1463 / DSM 18972 / AmH)</name>
    <dbReference type="NCBI Taxonomy" id="598659"/>
    <lineage>
        <taxon>Bacteria</taxon>
        <taxon>Pseudomonadati</taxon>
        <taxon>Campylobacterota</taxon>
        <taxon>Epsilonproteobacteria</taxon>
        <taxon>Nautiliales</taxon>
        <taxon>Nautiliaceae</taxon>
        <taxon>Nautilia</taxon>
    </lineage>
</organism>
<comment type="function">
    <text evidence="1">Catalyzes the base-exchange of a guanine (G) residue with the queuine precursor 7-aminomethyl-7-deazaguanine (PreQ1) at position 34 (anticodon wobble position) in tRNAs with GU(N) anticodons (tRNA-Asp, -Asn, -His and -Tyr). Catalysis occurs through a double-displacement mechanism. The nucleophile active site attacks the C1' of nucleotide 34 to detach the guanine base from the RNA, forming a covalent enzyme-RNA intermediate. The proton acceptor active site deprotonates the incoming PreQ1, allowing a nucleophilic attack on the C1' of the ribose to form the product. After dissociation, two additional enzymatic reactions on the tRNA convert PreQ1 to queuine (Q), resulting in the hypermodified nucleoside queuosine (7-(((4,5-cis-dihydroxy-2-cyclopenten-1-yl)amino)methyl)-7-deazaguanosine).</text>
</comment>
<comment type="catalytic activity">
    <reaction evidence="1">
        <text>7-aminomethyl-7-carbaguanine + guanosine(34) in tRNA = 7-aminomethyl-7-carbaguanosine(34) in tRNA + guanine</text>
        <dbReference type="Rhea" id="RHEA:24104"/>
        <dbReference type="Rhea" id="RHEA-COMP:10341"/>
        <dbReference type="Rhea" id="RHEA-COMP:10342"/>
        <dbReference type="ChEBI" id="CHEBI:16235"/>
        <dbReference type="ChEBI" id="CHEBI:58703"/>
        <dbReference type="ChEBI" id="CHEBI:74269"/>
        <dbReference type="ChEBI" id="CHEBI:82833"/>
        <dbReference type="EC" id="2.4.2.29"/>
    </reaction>
</comment>
<comment type="cofactor">
    <cofactor evidence="1">
        <name>Zn(2+)</name>
        <dbReference type="ChEBI" id="CHEBI:29105"/>
    </cofactor>
    <text evidence="1">Binds 1 zinc ion per subunit.</text>
</comment>
<comment type="pathway">
    <text evidence="1">tRNA modification; tRNA-queuosine biosynthesis.</text>
</comment>
<comment type="subunit">
    <text evidence="1">Homodimer. Within each dimer, one monomer is responsible for RNA recognition and catalysis, while the other monomer binds to the replacement base PreQ1.</text>
</comment>
<comment type="similarity">
    <text evidence="1">Belongs to the queuine tRNA-ribosyltransferase family.</text>
</comment>
<sequence>MEFRIDSIDGNARACTIKTEHSEIKTPIFMPVGTAAAVKSLDAIDMMEILDAPIILGNTYHLYLRPGDEIISKLGGLHGFSGYKRSFLTDSGGFQAFSLGDNVKFTDEGIWFKSHIDGSKHFFSPEKVIDIEYNLNSDIMMVLDDLIALPNTKERIKKSIERTTEWAYRSLVHHVNRGKKNNLFAIIQGGTDFEFRRISAESLVSLEYKGYTFDGFAIGGLSVGEENQLMYDTIEATTPYMPKDKPRYLMGVGTPEDIIEAVERGVDMFDCVMPTRNARNGYLFTTFGTLRIKNAKYKLDESPIDPKCNCYTCRNFSRAYLNHLFKAKELTYFRLASIHNLHYYLNFVKEIREAILEGRFKEYKKEFYSLRAMNSLEI</sequence>
<dbReference type="EC" id="2.4.2.29" evidence="1"/>
<dbReference type="EMBL" id="CP001279">
    <property type="protein sequence ID" value="ACM93508.1"/>
    <property type="molecule type" value="Genomic_DNA"/>
</dbReference>
<dbReference type="RefSeq" id="WP_015902560.1">
    <property type="nucleotide sequence ID" value="NC_012115.1"/>
</dbReference>
<dbReference type="SMR" id="B9L8E1"/>
<dbReference type="STRING" id="598659.NAMH_0482"/>
<dbReference type="KEGG" id="nam:NAMH_0482"/>
<dbReference type="eggNOG" id="COG0343">
    <property type="taxonomic scope" value="Bacteria"/>
</dbReference>
<dbReference type="HOGENOM" id="CLU_022060_0_1_7"/>
<dbReference type="OrthoDB" id="9805417at2"/>
<dbReference type="UniPathway" id="UPA00392"/>
<dbReference type="Proteomes" id="UP000000448">
    <property type="component" value="Chromosome"/>
</dbReference>
<dbReference type="GO" id="GO:0005829">
    <property type="term" value="C:cytosol"/>
    <property type="evidence" value="ECO:0007669"/>
    <property type="project" value="TreeGrafter"/>
</dbReference>
<dbReference type="GO" id="GO:0046872">
    <property type="term" value="F:metal ion binding"/>
    <property type="evidence" value="ECO:0007669"/>
    <property type="project" value="UniProtKB-KW"/>
</dbReference>
<dbReference type="GO" id="GO:0008479">
    <property type="term" value="F:tRNA-guanosine(34) queuine transglycosylase activity"/>
    <property type="evidence" value="ECO:0007669"/>
    <property type="project" value="UniProtKB-UniRule"/>
</dbReference>
<dbReference type="GO" id="GO:0008616">
    <property type="term" value="P:queuosine biosynthetic process"/>
    <property type="evidence" value="ECO:0007669"/>
    <property type="project" value="UniProtKB-UniRule"/>
</dbReference>
<dbReference type="GO" id="GO:0002099">
    <property type="term" value="P:tRNA wobble guanine modification"/>
    <property type="evidence" value="ECO:0007669"/>
    <property type="project" value="TreeGrafter"/>
</dbReference>
<dbReference type="GO" id="GO:0101030">
    <property type="term" value="P:tRNA-guanine transglycosylation"/>
    <property type="evidence" value="ECO:0007669"/>
    <property type="project" value="InterPro"/>
</dbReference>
<dbReference type="FunFam" id="3.20.20.105:FF:000001">
    <property type="entry name" value="Queuine tRNA-ribosyltransferase"/>
    <property type="match status" value="1"/>
</dbReference>
<dbReference type="Gene3D" id="3.20.20.105">
    <property type="entry name" value="Queuine tRNA-ribosyltransferase-like"/>
    <property type="match status" value="1"/>
</dbReference>
<dbReference type="HAMAP" id="MF_00168">
    <property type="entry name" value="Q_tRNA_Tgt"/>
    <property type="match status" value="1"/>
</dbReference>
<dbReference type="InterPro" id="IPR050076">
    <property type="entry name" value="ArchSynthase1/Queuine_TRR"/>
</dbReference>
<dbReference type="InterPro" id="IPR004803">
    <property type="entry name" value="TGT"/>
</dbReference>
<dbReference type="InterPro" id="IPR036511">
    <property type="entry name" value="TGT-like_sf"/>
</dbReference>
<dbReference type="InterPro" id="IPR002616">
    <property type="entry name" value="tRNA_ribo_trans-like"/>
</dbReference>
<dbReference type="NCBIfam" id="TIGR00430">
    <property type="entry name" value="Q_tRNA_tgt"/>
    <property type="match status" value="1"/>
</dbReference>
<dbReference type="NCBIfam" id="TIGR00449">
    <property type="entry name" value="tgt_general"/>
    <property type="match status" value="1"/>
</dbReference>
<dbReference type="PANTHER" id="PTHR46499">
    <property type="entry name" value="QUEUINE TRNA-RIBOSYLTRANSFERASE"/>
    <property type="match status" value="1"/>
</dbReference>
<dbReference type="PANTHER" id="PTHR46499:SF1">
    <property type="entry name" value="QUEUINE TRNA-RIBOSYLTRANSFERASE"/>
    <property type="match status" value="1"/>
</dbReference>
<dbReference type="Pfam" id="PF01702">
    <property type="entry name" value="TGT"/>
    <property type="match status" value="1"/>
</dbReference>
<dbReference type="SUPFAM" id="SSF51713">
    <property type="entry name" value="tRNA-guanine transglycosylase"/>
    <property type="match status" value="1"/>
</dbReference>
<proteinExistence type="inferred from homology"/>
<keyword id="KW-0328">Glycosyltransferase</keyword>
<keyword id="KW-0479">Metal-binding</keyword>
<keyword id="KW-0671">Queuosine biosynthesis</keyword>
<keyword id="KW-0808">Transferase</keyword>
<keyword id="KW-0819">tRNA processing</keyword>
<keyword id="KW-0862">Zinc</keyword>